<gene>
    <name type="primary">Mrps14</name>
</gene>
<accession>Q9CR88</accession>
<accession>Q3UNI7</accession>
<comment type="subunit">
    <text evidence="1 2">Component of the mitochondrial ribosome small subunit (28S) which comprises a 12S rRNA and about 30 distinct proteins (By similarity). Interacts with LIAT1.</text>
</comment>
<comment type="subcellular location">
    <subcellularLocation>
        <location evidence="1">Mitochondrion</location>
    </subcellularLocation>
</comment>
<comment type="similarity">
    <text evidence="3">Belongs to the universal ribosomal protein uS14 family.</text>
</comment>
<keyword id="KW-0002">3D-structure</keyword>
<keyword id="KW-0496">Mitochondrion</keyword>
<keyword id="KW-1185">Reference proteome</keyword>
<keyword id="KW-0687">Ribonucleoprotein</keyword>
<keyword id="KW-0689">Ribosomal protein</keyword>
<reference key="1">
    <citation type="journal article" date="2005" name="Science">
        <title>The transcriptional landscape of the mammalian genome.</title>
        <authorList>
            <person name="Carninci P."/>
            <person name="Kasukawa T."/>
            <person name="Katayama S."/>
            <person name="Gough J."/>
            <person name="Frith M.C."/>
            <person name="Maeda N."/>
            <person name="Oyama R."/>
            <person name="Ravasi T."/>
            <person name="Lenhard B."/>
            <person name="Wells C."/>
            <person name="Kodzius R."/>
            <person name="Shimokawa K."/>
            <person name="Bajic V.B."/>
            <person name="Brenner S.E."/>
            <person name="Batalov S."/>
            <person name="Forrest A.R."/>
            <person name="Zavolan M."/>
            <person name="Davis M.J."/>
            <person name="Wilming L.G."/>
            <person name="Aidinis V."/>
            <person name="Allen J.E."/>
            <person name="Ambesi-Impiombato A."/>
            <person name="Apweiler R."/>
            <person name="Aturaliya R.N."/>
            <person name="Bailey T.L."/>
            <person name="Bansal M."/>
            <person name="Baxter L."/>
            <person name="Beisel K.W."/>
            <person name="Bersano T."/>
            <person name="Bono H."/>
            <person name="Chalk A.M."/>
            <person name="Chiu K.P."/>
            <person name="Choudhary V."/>
            <person name="Christoffels A."/>
            <person name="Clutterbuck D.R."/>
            <person name="Crowe M.L."/>
            <person name="Dalla E."/>
            <person name="Dalrymple B.P."/>
            <person name="de Bono B."/>
            <person name="Della Gatta G."/>
            <person name="di Bernardo D."/>
            <person name="Down T."/>
            <person name="Engstrom P."/>
            <person name="Fagiolini M."/>
            <person name="Faulkner G."/>
            <person name="Fletcher C.F."/>
            <person name="Fukushima T."/>
            <person name="Furuno M."/>
            <person name="Futaki S."/>
            <person name="Gariboldi M."/>
            <person name="Georgii-Hemming P."/>
            <person name="Gingeras T.R."/>
            <person name="Gojobori T."/>
            <person name="Green R.E."/>
            <person name="Gustincich S."/>
            <person name="Harbers M."/>
            <person name="Hayashi Y."/>
            <person name="Hensch T.K."/>
            <person name="Hirokawa N."/>
            <person name="Hill D."/>
            <person name="Huminiecki L."/>
            <person name="Iacono M."/>
            <person name="Ikeo K."/>
            <person name="Iwama A."/>
            <person name="Ishikawa T."/>
            <person name="Jakt M."/>
            <person name="Kanapin A."/>
            <person name="Katoh M."/>
            <person name="Kawasawa Y."/>
            <person name="Kelso J."/>
            <person name="Kitamura H."/>
            <person name="Kitano H."/>
            <person name="Kollias G."/>
            <person name="Krishnan S.P."/>
            <person name="Kruger A."/>
            <person name="Kummerfeld S.K."/>
            <person name="Kurochkin I.V."/>
            <person name="Lareau L.F."/>
            <person name="Lazarevic D."/>
            <person name="Lipovich L."/>
            <person name="Liu J."/>
            <person name="Liuni S."/>
            <person name="McWilliam S."/>
            <person name="Madan Babu M."/>
            <person name="Madera M."/>
            <person name="Marchionni L."/>
            <person name="Matsuda H."/>
            <person name="Matsuzawa S."/>
            <person name="Miki H."/>
            <person name="Mignone F."/>
            <person name="Miyake S."/>
            <person name="Morris K."/>
            <person name="Mottagui-Tabar S."/>
            <person name="Mulder N."/>
            <person name="Nakano N."/>
            <person name="Nakauchi H."/>
            <person name="Ng P."/>
            <person name="Nilsson R."/>
            <person name="Nishiguchi S."/>
            <person name="Nishikawa S."/>
            <person name="Nori F."/>
            <person name="Ohara O."/>
            <person name="Okazaki Y."/>
            <person name="Orlando V."/>
            <person name="Pang K.C."/>
            <person name="Pavan W.J."/>
            <person name="Pavesi G."/>
            <person name="Pesole G."/>
            <person name="Petrovsky N."/>
            <person name="Piazza S."/>
            <person name="Reed J."/>
            <person name="Reid J.F."/>
            <person name="Ring B.Z."/>
            <person name="Ringwald M."/>
            <person name="Rost B."/>
            <person name="Ruan Y."/>
            <person name="Salzberg S.L."/>
            <person name="Sandelin A."/>
            <person name="Schneider C."/>
            <person name="Schoenbach C."/>
            <person name="Sekiguchi K."/>
            <person name="Semple C.A."/>
            <person name="Seno S."/>
            <person name="Sessa L."/>
            <person name="Sheng Y."/>
            <person name="Shibata Y."/>
            <person name="Shimada H."/>
            <person name="Shimada K."/>
            <person name="Silva D."/>
            <person name="Sinclair B."/>
            <person name="Sperling S."/>
            <person name="Stupka E."/>
            <person name="Sugiura K."/>
            <person name="Sultana R."/>
            <person name="Takenaka Y."/>
            <person name="Taki K."/>
            <person name="Tammoja K."/>
            <person name="Tan S.L."/>
            <person name="Tang S."/>
            <person name="Taylor M.S."/>
            <person name="Tegner J."/>
            <person name="Teichmann S.A."/>
            <person name="Ueda H.R."/>
            <person name="van Nimwegen E."/>
            <person name="Verardo R."/>
            <person name="Wei C.L."/>
            <person name="Yagi K."/>
            <person name="Yamanishi H."/>
            <person name="Zabarovsky E."/>
            <person name="Zhu S."/>
            <person name="Zimmer A."/>
            <person name="Hide W."/>
            <person name="Bult C."/>
            <person name="Grimmond S.M."/>
            <person name="Teasdale R.D."/>
            <person name="Liu E.T."/>
            <person name="Brusic V."/>
            <person name="Quackenbush J."/>
            <person name="Wahlestedt C."/>
            <person name="Mattick J.S."/>
            <person name="Hume D.A."/>
            <person name="Kai C."/>
            <person name="Sasaki D."/>
            <person name="Tomaru Y."/>
            <person name="Fukuda S."/>
            <person name="Kanamori-Katayama M."/>
            <person name="Suzuki M."/>
            <person name="Aoki J."/>
            <person name="Arakawa T."/>
            <person name="Iida J."/>
            <person name="Imamura K."/>
            <person name="Itoh M."/>
            <person name="Kato T."/>
            <person name="Kawaji H."/>
            <person name="Kawagashira N."/>
            <person name="Kawashima T."/>
            <person name="Kojima M."/>
            <person name="Kondo S."/>
            <person name="Konno H."/>
            <person name="Nakano K."/>
            <person name="Ninomiya N."/>
            <person name="Nishio T."/>
            <person name="Okada M."/>
            <person name="Plessy C."/>
            <person name="Shibata K."/>
            <person name="Shiraki T."/>
            <person name="Suzuki S."/>
            <person name="Tagami M."/>
            <person name="Waki K."/>
            <person name="Watahiki A."/>
            <person name="Okamura-Oho Y."/>
            <person name="Suzuki H."/>
            <person name="Kawai J."/>
            <person name="Hayashizaki Y."/>
        </authorList>
    </citation>
    <scope>NUCLEOTIDE SEQUENCE [LARGE SCALE MRNA]</scope>
    <source>
        <strain>C57BL/6J</strain>
        <tissue>Pancreas</tissue>
        <tissue>Thymus</tissue>
        <tissue>Tongue</tissue>
    </source>
</reference>
<reference key="2">
    <citation type="journal article" date="2004" name="Genome Res.">
        <title>The status, quality, and expansion of the NIH full-length cDNA project: the Mammalian Gene Collection (MGC).</title>
        <authorList>
            <consortium name="The MGC Project Team"/>
        </authorList>
    </citation>
    <scope>NUCLEOTIDE SEQUENCE [LARGE SCALE MRNA]</scope>
    <source>
        <strain>FVB/N-3</strain>
    </source>
</reference>
<reference key="3">
    <citation type="journal article" date="2010" name="Cell">
        <title>A tissue-specific atlas of mouse protein phosphorylation and expression.</title>
        <authorList>
            <person name="Huttlin E.L."/>
            <person name="Jedrychowski M.P."/>
            <person name="Elias J.E."/>
            <person name="Goswami T."/>
            <person name="Rad R."/>
            <person name="Beausoleil S.A."/>
            <person name="Villen J."/>
            <person name="Haas W."/>
            <person name="Sowa M.E."/>
            <person name="Gygi S.P."/>
        </authorList>
    </citation>
    <scope>IDENTIFICATION BY MASS SPECTROMETRY [LARGE SCALE ANALYSIS]</scope>
    <source>
        <tissue>Brain</tissue>
        <tissue>Brown adipose tissue</tissue>
        <tissue>Heart</tissue>
        <tissue>Kidney</tissue>
        <tissue>Liver</tissue>
        <tissue>Testis</tissue>
    </source>
</reference>
<reference key="4">
    <citation type="journal article" date="2014" name="Proc. Natl. Acad. Sci. U.S.A.">
        <title>Liat1, an arginyltransferase-binding protein whose evolution among primates involved changes in the numbers of its 10-residue repeats.</title>
        <authorList>
            <person name="Brower C.S."/>
            <person name="Rosen C.E."/>
            <person name="Jones R.H."/>
            <person name="Wadas B.C."/>
            <person name="Piatkov K.I."/>
            <person name="Varshavsky A."/>
        </authorList>
    </citation>
    <scope>INTERACTION WITH LIAT1</scope>
</reference>
<dbReference type="EMBL" id="AK007673">
    <property type="protein sequence ID" value="BAB25177.1"/>
    <property type="molecule type" value="mRNA"/>
</dbReference>
<dbReference type="EMBL" id="AK010242">
    <property type="protein sequence ID" value="BAB26793.1"/>
    <property type="molecule type" value="mRNA"/>
</dbReference>
<dbReference type="EMBL" id="AK083352">
    <property type="protein sequence ID" value="BAC38881.1"/>
    <property type="molecule type" value="mRNA"/>
</dbReference>
<dbReference type="EMBL" id="AK144195">
    <property type="protein sequence ID" value="BAE25760.1"/>
    <property type="molecule type" value="mRNA"/>
</dbReference>
<dbReference type="EMBL" id="BC044057">
    <property type="protein sequence ID" value="AAH44057.1"/>
    <property type="molecule type" value="mRNA"/>
</dbReference>
<dbReference type="CCDS" id="CCDS15405.1"/>
<dbReference type="RefSeq" id="NP_079750.1">
    <property type="nucleotide sequence ID" value="NM_025474.4"/>
</dbReference>
<dbReference type="PDB" id="7PNT">
    <property type="method" value="EM"/>
    <property type="resolution" value="3.19 A"/>
    <property type="chains" value="K=1-128"/>
</dbReference>
<dbReference type="PDB" id="7PNU">
    <property type="method" value="EM"/>
    <property type="resolution" value="3.06 A"/>
    <property type="chains" value="K=1-128"/>
</dbReference>
<dbReference type="PDB" id="7PNV">
    <property type="method" value="EM"/>
    <property type="resolution" value="3.06 A"/>
    <property type="chains" value="K=1-128"/>
</dbReference>
<dbReference type="PDB" id="7PNW">
    <property type="method" value="EM"/>
    <property type="resolution" value="3.09 A"/>
    <property type="chains" value="K=1-128"/>
</dbReference>
<dbReference type="PDBsum" id="7PNT"/>
<dbReference type="PDBsum" id="7PNU"/>
<dbReference type="PDBsum" id="7PNV"/>
<dbReference type="PDBsum" id="7PNW"/>
<dbReference type="EMDB" id="EMD-13551"/>
<dbReference type="EMDB" id="EMD-13552"/>
<dbReference type="EMDB" id="EMD-13553"/>
<dbReference type="EMDB" id="EMD-13554"/>
<dbReference type="SMR" id="Q9CR88"/>
<dbReference type="ComplexPortal" id="CPX-5301">
    <property type="entry name" value="28S mitochondrial small ribosomal subunit"/>
</dbReference>
<dbReference type="FunCoup" id="Q9CR88">
    <property type="interactions" value="2167"/>
</dbReference>
<dbReference type="STRING" id="10090.ENSMUSP00000120075"/>
<dbReference type="PaxDb" id="10090-ENSMUSP00000120075"/>
<dbReference type="ProteomicsDB" id="262719"/>
<dbReference type="Pumba" id="Q9CR88"/>
<dbReference type="Antibodypedia" id="63335">
    <property type="antibodies" value="47 antibodies from 14 providers"/>
</dbReference>
<dbReference type="DNASU" id="64659"/>
<dbReference type="Ensembl" id="ENSMUST00000135680.8">
    <property type="protein sequence ID" value="ENSMUSP00000120075.2"/>
    <property type="gene ID" value="ENSMUSG00000058267.14"/>
</dbReference>
<dbReference type="GeneID" id="64659"/>
<dbReference type="KEGG" id="mmu:64659"/>
<dbReference type="UCSC" id="uc007def.1">
    <property type="organism name" value="mouse"/>
</dbReference>
<dbReference type="AGR" id="MGI:1928141"/>
<dbReference type="CTD" id="63931"/>
<dbReference type="MGI" id="MGI:1928141">
    <property type="gene designation" value="Mrps14"/>
</dbReference>
<dbReference type="VEuPathDB" id="HostDB:ENSMUSG00000058267"/>
<dbReference type="eggNOG" id="KOG1741">
    <property type="taxonomic scope" value="Eukaryota"/>
</dbReference>
<dbReference type="GeneTree" id="ENSGT00390000015663"/>
<dbReference type="HOGENOM" id="CLU_139869_1_0_1"/>
<dbReference type="InParanoid" id="Q9CR88"/>
<dbReference type="OMA" id="FGLCRNQ"/>
<dbReference type="OrthoDB" id="413436at2759"/>
<dbReference type="PhylomeDB" id="Q9CR88"/>
<dbReference type="TreeFam" id="TF320418"/>
<dbReference type="Reactome" id="R-MMU-5389840">
    <property type="pathway name" value="Mitochondrial translation elongation"/>
</dbReference>
<dbReference type="Reactome" id="R-MMU-5419276">
    <property type="pathway name" value="Mitochondrial translation termination"/>
</dbReference>
<dbReference type="BioGRID-ORCS" id="64659">
    <property type="hits" value="26 hits in 81 CRISPR screens"/>
</dbReference>
<dbReference type="ChiTaRS" id="Mrps14">
    <property type="organism name" value="mouse"/>
</dbReference>
<dbReference type="PRO" id="PR:Q9CR88"/>
<dbReference type="Proteomes" id="UP000000589">
    <property type="component" value="Chromosome 1"/>
</dbReference>
<dbReference type="RNAct" id="Q9CR88">
    <property type="molecule type" value="protein"/>
</dbReference>
<dbReference type="Bgee" id="ENSMUSG00000058267">
    <property type="expression patterns" value="Expressed in facial nucleus and 257 other cell types or tissues"/>
</dbReference>
<dbReference type="ExpressionAtlas" id="Q9CR88">
    <property type="expression patterns" value="baseline and differential"/>
</dbReference>
<dbReference type="GO" id="GO:0005743">
    <property type="term" value="C:mitochondrial inner membrane"/>
    <property type="evidence" value="ECO:0000303"/>
    <property type="project" value="ComplexPortal"/>
</dbReference>
<dbReference type="GO" id="GO:0005763">
    <property type="term" value="C:mitochondrial small ribosomal subunit"/>
    <property type="evidence" value="ECO:0000250"/>
    <property type="project" value="UniProtKB"/>
</dbReference>
<dbReference type="GO" id="GO:0005739">
    <property type="term" value="C:mitochondrion"/>
    <property type="evidence" value="ECO:0007005"/>
    <property type="project" value="MGI"/>
</dbReference>
<dbReference type="GO" id="GO:0031965">
    <property type="term" value="C:nuclear membrane"/>
    <property type="evidence" value="ECO:0007669"/>
    <property type="project" value="Ensembl"/>
</dbReference>
<dbReference type="GO" id="GO:0003735">
    <property type="term" value="F:structural constituent of ribosome"/>
    <property type="evidence" value="ECO:0000250"/>
    <property type="project" value="MGI"/>
</dbReference>
<dbReference type="GO" id="GO:0032543">
    <property type="term" value="P:mitochondrial translation"/>
    <property type="evidence" value="ECO:0000303"/>
    <property type="project" value="ComplexPortal"/>
</dbReference>
<dbReference type="FunFam" id="1.10.287.1480:FF:000001">
    <property type="entry name" value="30S ribosomal protein S14"/>
    <property type="match status" value="1"/>
</dbReference>
<dbReference type="Gene3D" id="1.10.287.1480">
    <property type="match status" value="1"/>
</dbReference>
<dbReference type="InterPro" id="IPR001209">
    <property type="entry name" value="Ribosomal_uS14"/>
</dbReference>
<dbReference type="PANTHER" id="PTHR19836">
    <property type="entry name" value="30S RIBOSOMAL PROTEIN S14"/>
    <property type="match status" value="1"/>
</dbReference>
<dbReference type="PANTHER" id="PTHR19836:SF19">
    <property type="entry name" value="SMALL RIBOSOMAL SUBUNIT PROTEIN US14M"/>
    <property type="match status" value="1"/>
</dbReference>
<dbReference type="Pfam" id="PF00253">
    <property type="entry name" value="Ribosomal_S14"/>
    <property type="match status" value="1"/>
</dbReference>
<dbReference type="SUPFAM" id="SSF57716">
    <property type="entry name" value="Glucocorticoid receptor-like (DNA-binding domain)"/>
    <property type="match status" value="1"/>
</dbReference>
<name>RT14_MOUSE</name>
<evidence type="ECO:0000250" key="1">
    <source>
        <dbReference type="UniProtKB" id="O60783"/>
    </source>
</evidence>
<evidence type="ECO:0000269" key="2">
    <source>
    </source>
</evidence>
<evidence type="ECO:0000305" key="3"/>
<organism>
    <name type="scientific">Mus musculus</name>
    <name type="common">Mouse</name>
    <dbReference type="NCBI Taxonomy" id="10090"/>
    <lineage>
        <taxon>Eukaryota</taxon>
        <taxon>Metazoa</taxon>
        <taxon>Chordata</taxon>
        <taxon>Craniata</taxon>
        <taxon>Vertebrata</taxon>
        <taxon>Euteleostomi</taxon>
        <taxon>Mammalia</taxon>
        <taxon>Eutheria</taxon>
        <taxon>Euarchontoglires</taxon>
        <taxon>Glires</taxon>
        <taxon>Rodentia</taxon>
        <taxon>Myomorpha</taxon>
        <taxon>Muroidea</taxon>
        <taxon>Muridae</taxon>
        <taxon>Murinae</taxon>
        <taxon>Mus</taxon>
        <taxon>Mus</taxon>
    </lineage>
</organism>
<proteinExistence type="evidence at protein level"/>
<feature type="chain" id="PRO_0000131014" description="Small ribosomal subunit protein uS14m">
    <location>
        <begin position="1"/>
        <end position="128"/>
    </location>
</feature>
<protein>
    <recommendedName>
        <fullName evidence="3">Small ribosomal subunit protein uS14m</fullName>
    </recommendedName>
    <alternativeName>
        <fullName>28S ribosomal protein S14, mitochondrial</fullName>
        <shortName>MRP-S14</shortName>
        <shortName>S14mt</shortName>
    </alternativeName>
</protein>
<sequence>MAASVLGSLLRTFRQAVPPSASGQVRGYYVDWRMLRDLKRRKMAYEYADERLRINSLRKNTILPKDLQEMAGDEIAALPRDSCPVRIRNRCVMTSRPRGVKRRWRLSRIVFRHLADHGLLSGVQRAIW</sequence>